<reference key="1">
    <citation type="journal article" date="2007" name="Proc. Natl. Acad. Sci. U.S.A.">
        <title>Deep-sea vent epsilon-proteobacterial genomes provide insights into emergence of pathogens.</title>
        <authorList>
            <person name="Nakagawa S."/>
            <person name="Takaki Y."/>
            <person name="Shimamura S."/>
            <person name="Reysenbach A.-L."/>
            <person name="Takai K."/>
            <person name="Horikoshi K."/>
        </authorList>
    </citation>
    <scope>NUCLEOTIDE SEQUENCE [LARGE SCALE GENOMIC DNA]</scope>
    <source>
        <strain>SB155-2</strain>
    </source>
</reference>
<protein>
    <recommendedName>
        <fullName evidence="1">Ribosomal protein L11 methyltransferase</fullName>
        <shortName evidence="1">L11 Mtase</shortName>
        <ecNumber evidence="1">2.1.1.-</ecNumber>
    </recommendedName>
</protein>
<comment type="function">
    <text evidence="1">Methylates ribosomal protein L11.</text>
</comment>
<comment type="catalytic activity">
    <reaction evidence="1">
        <text>L-lysyl-[protein] + 3 S-adenosyl-L-methionine = N(6),N(6),N(6)-trimethyl-L-lysyl-[protein] + 3 S-adenosyl-L-homocysteine + 3 H(+)</text>
        <dbReference type="Rhea" id="RHEA:54192"/>
        <dbReference type="Rhea" id="RHEA-COMP:9752"/>
        <dbReference type="Rhea" id="RHEA-COMP:13826"/>
        <dbReference type="ChEBI" id="CHEBI:15378"/>
        <dbReference type="ChEBI" id="CHEBI:29969"/>
        <dbReference type="ChEBI" id="CHEBI:57856"/>
        <dbReference type="ChEBI" id="CHEBI:59789"/>
        <dbReference type="ChEBI" id="CHEBI:61961"/>
    </reaction>
</comment>
<comment type="subcellular location">
    <subcellularLocation>
        <location evidence="1">Cytoplasm</location>
    </subcellularLocation>
</comment>
<comment type="similarity">
    <text evidence="1">Belongs to the methyltransferase superfamily. PrmA family.</text>
</comment>
<name>PRMA_NITSB</name>
<proteinExistence type="inferred from homology"/>
<dbReference type="EC" id="2.1.1.-" evidence="1"/>
<dbReference type="EMBL" id="AP009178">
    <property type="protein sequence ID" value="BAF70517.1"/>
    <property type="molecule type" value="Genomic_DNA"/>
</dbReference>
<dbReference type="RefSeq" id="WP_012082780.1">
    <property type="nucleotide sequence ID" value="NC_009662.1"/>
</dbReference>
<dbReference type="SMR" id="A6Q4V8"/>
<dbReference type="FunCoup" id="A6Q4V8">
    <property type="interactions" value="391"/>
</dbReference>
<dbReference type="STRING" id="387092.NIS_1410"/>
<dbReference type="KEGG" id="nis:NIS_1410"/>
<dbReference type="eggNOG" id="COG2264">
    <property type="taxonomic scope" value="Bacteria"/>
</dbReference>
<dbReference type="HOGENOM" id="CLU_049382_1_0_7"/>
<dbReference type="InParanoid" id="A6Q4V8"/>
<dbReference type="OrthoDB" id="9785995at2"/>
<dbReference type="Proteomes" id="UP000001118">
    <property type="component" value="Chromosome"/>
</dbReference>
<dbReference type="GO" id="GO:0005737">
    <property type="term" value="C:cytoplasm"/>
    <property type="evidence" value="ECO:0007669"/>
    <property type="project" value="UniProtKB-SubCell"/>
</dbReference>
<dbReference type="GO" id="GO:0016279">
    <property type="term" value="F:protein-lysine N-methyltransferase activity"/>
    <property type="evidence" value="ECO:0007669"/>
    <property type="project" value="RHEA"/>
</dbReference>
<dbReference type="GO" id="GO:0032259">
    <property type="term" value="P:methylation"/>
    <property type="evidence" value="ECO:0007669"/>
    <property type="project" value="UniProtKB-KW"/>
</dbReference>
<dbReference type="CDD" id="cd02440">
    <property type="entry name" value="AdoMet_MTases"/>
    <property type="match status" value="1"/>
</dbReference>
<dbReference type="Gene3D" id="3.40.50.150">
    <property type="entry name" value="Vaccinia Virus protein VP39"/>
    <property type="match status" value="1"/>
</dbReference>
<dbReference type="HAMAP" id="MF_00735">
    <property type="entry name" value="Methyltr_PrmA"/>
    <property type="match status" value="1"/>
</dbReference>
<dbReference type="InterPro" id="IPR050078">
    <property type="entry name" value="Ribosomal_L11_MeTrfase_PrmA"/>
</dbReference>
<dbReference type="InterPro" id="IPR004498">
    <property type="entry name" value="Ribosomal_PrmA_MeTrfase"/>
</dbReference>
<dbReference type="InterPro" id="IPR029063">
    <property type="entry name" value="SAM-dependent_MTases_sf"/>
</dbReference>
<dbReference type="NCBIfam" id="NF001786">
    <property type="entry name" value="PRK00517.2-4"/>
    <property type="match status" value="1"/>
</dbReference>
<dbReference type="NCBIfam" id="TIGR00406">
    <property type="entry name" value="prmA"/>
    <property type="match status" value="1"/>
</dbReference>
<dbReference type="PANTHER" id="PTHR43648">
    <property type="entry name" value="ELECTRON TRANSFER FLAVOPROTEIN BETA SUBUNIT LYSINE METHYLTRANSFERASE"/>
    <property type="match status" value="1"/>
</dbReference>
<dbReference type="PANTHER" id="PTHR43648:SF1">
    <property type="entry name" value="ELECTRON TRANSFER FLAVOPROTEIN BETA SUBUNIT LYSINE METHYLTRANSFERASE"/>
    <property type="match status" value="1"/>
</dbReference>
<dbReference type="Pfam" id="PF06325">
    <property type="entry name" value="PrmA"/>
    <property type="match status" value="1"/>
</dbReference>
<dbReference type="PIRSF" id="PIRSF000401">
    <property type="entry name" value="RPL11_MTase"/>
    <property type="match status" value="1"/>
</dbReference>
<dbReference type="SUPFAM" id="SSF53335">
    <property type="entry name" value="S-adenosyl-L-methionine-dependent methyltransferases"/>
    <property type="match status" value="1"/>
</dbReference>
<feature type="chain" id="PRO_1000046052" description="Ribosomal protein L11 methyltransferase">
    <location>
        <begin position="1"/>
        <end position="280"/>
    </location>
</feature>
<feature type="binding site" evidence="1">
    <location>
        <position position="130"/>
    </location>
    <ligand>
        <name>S-adenosyl-L-methionine</name>
        <dbReference type="ChEBI" id="CHEBI:59789"/>
    </ligand>
</feature>
<feature type="binding site" evidence="1">
    <location>
        <position position="151"/>
    </location>
    <ligand>
        <name>S-adenosyl-L-methionine</name>
        <dbReference type="ChEBI" id="CHEBI:59789"/>
    </ligand>
</feature>
<feature type="binding site" evidence="1">
    <location>
        <position position="172"/>
    </location>
    <ligand>
        <name>S-adenosyl-L-methionine</name>
        <dbReference type="ChEBI" id="CHEBI:59789"/>
    </ligand>
</feature>
<feature type="binding site" evidence="1">
    <location>
        <position position="213"/>
    </location>
    <ligand>
        <name>S-adenosyl-L-methionine</name>
        <dbReference type="ChEBI" id="CHEBI:59789"/>
    </ligand>
</feature>
<evidence type="ECO:0000255" key="1">
    <source>
        <dbReference type="HAMAP-Rule" id="MF_00735"/>
    </source>
</evidence>
<sequence>MDRYYYEYTVDIDAFKDEIESFLMDRFYNGIEESDGKLILRSEKSLDDIMDELRTYVDSLIKLFDTEIHLKITKEKKENIDWIEKYKKSITPVEVGEFYIHPSWYEPKEGKTNIKIDPALAFGSGHHETTRGCLNAIQKYVQPGMELLDVGCGSGILSIAAAKKGAVVDICDTDALALEESQKNFSLNGVEFREGWVGSAANAKKKYDIVIANIVADVLIMIAKDLQETTKEGGILILSGIIEKYRNKVKNRFDFSILEELQEGEWITMILRNDRGTDGK</sequence>
<organism>
    <name type="scientific">Nitratiruptor sp. (strain SB155-2)</name>
    <dbReference type="NCBI Taxonomy" id="387092"/>
    <lineage>
        <taxon>Bacteria</taxon>
        <taxon>Pseudomonadati</taxon>
        <taxon>Campylobacterota</taxon>
        <taxon>Epsilonproteobacteria</taxon>
        <taxon>Nautiliales</taxon>
        <taxon>Nitratiruptoraceae</taxon>
        <taxon>Nitratiruptor</taxon>
    </lineage>
</organism>
<accession>A6Q4V8</accession>
<gene>
    <name evidence="1" type="primary">prmA</name>
    <name type="ordered locus">NIS_1410</name>
</gene>
<keyword id="KW-0963">Cytoplasm</keyword>
<keyword id="KW-0489">Methyltransferase</keyword>
<keyword id="KW-1185">Reference proteome</keyword>
<keyword id="KW-0949">S-adenosyl-L-methionine</keyword>
<keyword id="KW-0808">Transferase</keyword>